<protein>
    <recommendedName>
        <fullName>Cofilin</fullName>
    </recommendedName>
    <alternativeName>
        <fullName>Actin-depolymerizing factor 1</fullName>
    </alternativeName>
</protein>
<accession>P78929</accession>
<evidence type="ECO:0000255" key="1">
    <source>
        <dbReference type="PROSITE-ProRule" id="PRU00599"/>
    </source>
</evidence>
<evidence type="ECO:0000269" key="2">
    <source>
    </source>
</evidence>
<evidence type="ECO:0000269" key="3">
    <source>
    </source>
</evidence>
<evidence type="ECO:0000305" key="4"/>
<evidence type="ECO:0007829" key="5">
    <source>
        <dbReference type="PDB" id="2I2Q"/>
    </source>
</evidence>
<comment type="function">
    <text evidence="2 3">Controls reversibly actin polymerization and depolymerization in a pH-sensitive manner. It has the ability to bind G- and F-actin in a 1:1 ratio of cofilin to actin. Binding to F-actin is regulated by tropomyosin. It is the major component of intranuclear and cytoplasmic actin rods. Required for accumulation of actin at the cell division site via depolymerizing actin at the cell ends. In association with myosin II has a role in the assembly of the contractile ring via severing actin filaments. Involved in the maintenance of the contractile ring once formed. In association with profilin and capping protein, has a role in the mitotic reorganization of the actin cytoskeleton. Severs actin filaments (F-actin) (PubMed:20042603).</text>
</comment>
<comment type="subcellular location">
    <subcellularLocation>
        <location>Cytoplasm</location>
    </subcellularLocation>
    <subcellularLocation>
        <location>Cytoplasm</location>
        <location>Cytoskeleton</location>
    </subcellularLocation>
    <subcellularLocation>
        <location>Nucleus matrix</location>
    </subcellularLocation>
    <text>Septum. Throughout the cytoplasm (but not on the cytoplasmic cables) and major component of the cortical actin cytoskeleton.</text>
</comment>
<comment type="similarity">
    <text evidence="4">Belongs to the actin-binding proteins ADF family.</text>
</comment>
<reference key="1">
    <citation type="submission" date="1996-12" db="EMBL/GenBank/DDBJ databases">
        <title>S. pombe cDNA for actin depolymerizing factor.</title>
        <authorList>
            <person name="Kawamukai M."/>
        </authorList>
    </citation>
    <scope>NUCLEOTIDE SEQUENCE [MRNA]</scope>
</reference>
<reference key="2">
    <citation type="journal article" date="2002" name="Nature">
        <title>The genome sequence of Schizosaccharomyces pombe.</title>
        <authorList>
            <person name="Wood V."/>
            <person name="Gwilliam R."/>
            <person name="Rajandream M.A."/>
            <person name="Lyne M.H."/>
            <person name="Lyne R."/>
            <person name="Stewart A."/>
            <person name="Sgouros J.G."/>
            <person name="Peat N."/>
            <person name="Hayles J."/>
            <person name="Baker S.G."/>
            <person name="Basham D."/>
            <person name="Bowman S."/>
            <person name="Brooks K."/>
            <person name="Brown D."/>
            <person name="Brown S."/>
            <person name="Chillingworth T."/>
            <person name="Churcher C.M."/>
            <person name="Collins M."/>
            <person name="Connor R."/>
            <person name="Cronin A."/>
            <person name="Davis P."/>
            <person name="Feltwell T."/>
            <person name="Fraser A."/>
            <person name="Gentles S."/>
            <person name="Goble A."/>
            <person name="Hamlin N."/>
            <person name="Harris D.E."/>
            <person name="Hidalgo J."/>
            <person name="Hodgson G."/>
            <person name="Holroyd S."/>
            <person name="Hornsby T."/>
            <person name="Howarth S."/>
            <person name="Huckle E.J."/>
            <person name="Hunt S."/>
            <person name="Jagels K."/>
            <person name="James K.D."/>
            <person name="Jones L."/>
            <person name="Jones M."/>
            <person name="Leather S."/>
            <person name="McDonald S."/>
            <person name="McLean J."/>
            <person name="Mooney P."/>
            <person name="Moule S."/>
            <person name="Mungall K.L."/>
            <person name="Murphy L.D."/>
            <person name="Niblett D."/>
            <person name="Odell C."/>
            <person name="Oliver K."/>
            <person name="O'Neil S."/>
            <person name="Pearson D."/>
            <person name="Quail M.A."/>
            <person name="Rabbinowitsch E."/>
            <person name="Rutherford K.M."/>
            <person name="Rutter S."/>
            <person name="Saunders D."/>
            <person name="Seeger K."/>
            <person name="Sharp S."/>
            <person name="Skelton J."/>
            <person name="Simmonds M.N."/>
            <person name="Squares R."/>
            <person name="Squares S."/>
            <person name="Stevens K."/>
            <person name="Taylor K."/>
            <person name="Taylor R.G."/>
            <person name="Tivey A."/>
            <person name="Walsh S.V."/>
            <person name="Warren T."/>
            <person name="Whitehead S."/>
            <person name="Woodward J.R."/>
            <person name="Volckaert G."/>
            <person name="Aert R."/>
            <person name="Robben J."/>
            <person name="Grymonprez B."/>
            <person name="Weltjens I."/>
            <person name="Vanstreels E."/>
            <person name="Rieger M."/>
            <person name="Schaefer M."/>
            <person name="Mueller-Auer S."/>
            <person name="Gabel C."/>
            <person name="Fuchs M."/>
            <person name="Duesterhoeft A."/>
            <person name="Fritzc C."/>
            <person name="Holzer E."/>
            <person name="Moestl D."/>
            <person name="Hilbert H."/>
            <person name="Borzym K."/>
            <person name="Langer I."/>
            <person name="Beck A."/>
            <person name="Lehrach H."/>
            <person name="Reinhardt R."/>
            <person name="Pohl T.M."/>
            <person name="Eger P."/>
            <person name="Zimmermann W."/>
            <person name="Wedler H."/>
            <person name="Wambutt R."/>
            <person name="Purnelle B."/>
            <person name="Goffeau A."/>
            <person name="Cadieu E."/>
            <person name="Dreano S."/>
            <person name="Gloux S."/>
            <person name="Lelaure V."/>
            <person name="Mottier S."/>
            <person name="Galibert F."/>
            <person name="Aves S.J."/>
            <person name="Xiang Z."/>
            <person name="Hunt C."/>
            <person name="Moore K."/>
            <person name="Hurst S.M."/>
            <person name="Lucas M."/>
            <person name="Rochet M."/>
            <person name="Gaillardin C."/>
            <person name="Tallada V.A."/>
            <person name="Garzon A."/>
            <person name="Thode G."/>
            <person name="Daga R.R."/>
            <person name="Cruzado L."/>
            <person name="Jimenez J."/>
            <person name="Sanchez M."/>
            <person name="del Rey F."/>
            <person name="Benito J."/>
            <person name="Dominguez A."/>
            <person name="Revuelta J.L."/>
            <person name="Moreno S."/>
            <person name="Armstrong J."/>
            <person name="Forsburg S.L."/>
            <person name="Cerutti L."/>
            <person name="Lowe T."/>
            <person name="McCombie W.R."/>
            <person name="Paulsen I."/>
            <person name="Potashkin J."/>
            <person name="Shpakovski G.V."/>
            <person name="Ussery D."/>
            <person name="Barrell B.G."/>
            <person name="Nurse P."/>
        </authorList>
    </citation>
    <scope>NUCLEOTIDE SEQUENCE [LARGE SCALE GENOMIC DNA]</scope>
    <source>
        <strain>972 / ATCC 24843</strain>
    </source>
</reference>
<reference key="3">
    <citation type="journal article" date="2006" name="Mol. Biol. Cell">
        <title>Actin-depolymerizing protein Adf1 is required for formation and maintenance of the contractile ring during cytokinesis in fission yeast.</title>
        <authorList>
            <person name="Nakano K."/>
            <person name="Mabuchi I."/>
        </authorList>
    </citation>
    <scope>FUNCTION</scope>
    <scope>SUBCELLULAR LOCATION</scope>
</reference>
<reference key="4">
    <citation type="journal article" date="2006" name="Nat. Biotechnol.">
        <title>ORFeome cloning and global analysis of protein localization in the fission yeast Schizosaccharomyces pombe.</title>
        <authorList>
            <person name="Matsuyama A."/>
            <person name="Arai R."/>
            <person name="Yashiroda Y."/>
            <person name="Shirai A."/>
            <person name="Kamata A."/>
            <person name="Sekido S."/>
            <person name="Kobayashi Y."/>
            <person name="Hashimoto A."/>
            <person name="Hamamoto M."/>
            <person name="Hiraoka Y."/>
            <person name="Horinouchi S."/>
            <person name="Yoshida M."/>
        </authorList>
    </citation>
    <scope>SUBCELLULAR LOCATION [LARGE SCALE ANALYSIS]</scope>
</reference>
<reference key="5">
    <citation type="journal article" date="2010" name="J. Biol. Chem.">
        <title>Toxoplasma gondii actin depolymerizing factor acts primarily to sequester G-actin.</title>
        <authorList>
            <person name="Mehta S."/>
            <person name="Sibley L.D."/>
        </authorList>
    </citation>
    <scope>FUNCTION</scope>
</reference>
<dbReference type="EMBL" id="D89939">
    <property type="protein sequence ID" value="BAA14039.1"/>
    <property type="molecule type" value="mRNA"/>
</dbReference>
<dbReference type="EMBL" id="CU329670">
    <property type="protein sequence ID" value="CAB11258.1"/>
    <property type="molecule type" value="Genomic_DNA"/>
</dbReference>
<dbReference type="PIR" id="T43245">
    <property type="entry name" value="T43245"/>
</dbReference>
<dbReference type="RefSeq" id="NP_594741.1">
    <property type="nucleotide sequence ID" value="NM_001020169.2"/>
</dbReference>
<dbReference type="PDB" id="2I2Q">
    <property type="method" value="X-ray"/>
    <property type="resolution" value="1.72 A"/>
    <property type="chains" value="A=1-137"/>
</dbReference>
<dbReference type="PDBsum" id="2I2Q"/>
<dbReference type="SMR" id="P78929"/>
<dbReference type="BioGRID" id="278232">
    <property type="interactions" value="18"/>
</dbReference>
<dbReference type="FunCoup" id="P78929">
    <property type="interactions" value="158"/>
</dbReference>
<dbReference type="STRING" id="284812.P78929"/>
<dbReference type="iPTMnet" id="P78929"/>
<dbReference type="SwissPalm" id="P78929"/>
<dbReference type="PaxDb" id="4896-SPAC20G4.06c.1"/>
<dbReference type="EnsemblFungi" id="SPAC20G4.06c.1">
    <property type="protein sequence ID" value="SPAC20G4.06c.1:pep"/>
    <property type="gene ID" value="SPAC20G4.06c"/>
</dbReference>
<dbReference type="GeneID" id="2541738"/>
<dbReference type="KEGG" id="spo:2541738"/>
<dbReference type="PomBase" id="SPAC20G4.06c"/>
<dbReference type="VEuPathDB" id="FungiDB:SPAC20G4.06c"/>
<dbReference type="eggNOG" id="KOG1735">
    <property type="taxonomic scope" value="Eukaryota"/>
</dbReference>
<dbReference type="HOGENOM" id="CLU_094004_3_2_1"/>
<dbReference type="InParanoid" id="P78929"/>
<dbReference type="OMA" id="QCRFAVY"/>
<dbReference type="PhylomeDB" id="P78929"/>
<dbReference type="EvolutionaryTrace" id="P78929"/>
<dbReference type="PRO" id="PR:P78929"/>
<dbReference type="Proteomes" id="UP000002485">
    <property type="component" value="Chromosome I"/>
</dbReference>
<dbReference type="GO" id="GO:0030479">
    <property type="term" value="C:actin cortical patch"/>
    <property type="evidence" value="ECO:0000314"/>
    <property type="project" value="PomBase"/>
</dbReference>
<dbReference type="GO" id="GO:0015629">
    <property type="term" value="C:actin cytoskeleton"/>
    <property type="evidence" value="ECO:0000318"/>
    <property type="project" value="GO_Central"/>
</dbReference>
<dbReference type="GO" id="GO:0032153">
    <property type="term" value="C:cell division site"/>
    <property type="evidence" value="ECO:0007005"/>
    <property type="project" value="PomBase"/>
</dbReference>
<dbReference type="GO" id="GO:0051286">
    <property type="term" value="C:cell tip"/>
    <property type="evidence" value="ECO:0007005"/>
    <property type="project" value="PomBase"/>
</dbReference>
<dbReference type="GO" id="GO:0005737">
    <property type="term" value="C:cytoplasm"/>
    <property type="evidence" value="ECO:0000318"/>
    <property type="project" value="GO_Central"/>
</dbReference>
<dbReference type="GO" id="GO:0031097">
    <property type="term" value="C:medial cortex"/>
    <property type="evidence" value="ECO:0000314"/>
    <property type="project" value="PomBase"/>
</dbReference>
<dbReference type="GO" id="GO:0110085">
    <property type="term" value="C:mitotic actomyosin contractile ring"/>
    <property type="evidence" value="ECO:0000314"/>
    <property type="project" value="PomBase"/>
</dbReference>
<dbReference type="GO" id="GO:0016363">
    <property type="term" value="C:nuclear matrix"/>
    <property type="evidence" value="ECO:0007669"/>
    <property type="project" value="UniProtKB-SubCell"/>
</dbReference>
<dbReference type="GO" id="GO:0051015">
    <property type="term" value="F:actin filament binding"/>
    <property type="evidence" value="ECO:0000314"/>
    <property type="project" value="PomBase"/>
</dbReference>
<dbReference type="GO" id="GO:0140775">
    <property type="term" value="F:actin filament debranching activity"/>
    <property type="evidence" value="ECO:0000314"/>
    <property type="project" value="PomBase"/>
</dbReference>
<dbReference type="GO" id="GO:0003789">
    <property type="term" value="F:actin filament severing activity"/>
    <property type="evidence" value="ECO:0000314"/>
    <property type="project" value="UniProtKB"/>
</dbReference>
<dbReference type="GO" id="GO:0003785">
    <property type="term" value="F:actin monomer binding"/>
    <property type="evidence" value="ECO:0000314"/>
    <property type="project" value="PomBase"/>
</dbReference>
<dbReference type="GO" id="GO:0030042">
    <property type="term" value="P:actin filament depolymerization"/>
    <property type="evidence" value="ECO:0000318"/>
    <property type="project" value="GO_Central"/>
</dbReference>
<dbReference type="GO" id="GO:0051014">
    <property type="term" value="P:actin filament severing"/>
    <property type="evidence" value="ECO:0000314"/>
    <property type="project" value="PomBase"/>
</dbReference>
<dbReference type="GO" id="GO:1903475">
    <property type="term" value="P:mitotic actomyosin contractile ring assembly"/>
    <property type="evidence" value="ECO:0000314"/>
    <property type="project" value="PomBase"/>
</dbReference>
<dbReference type="CDD" id="cd11286">
    <property type="entry name" value="ADF_cofilin_like"/>
    <property type="match status" value="1"/>
</dbReference>
<dbReference type="FunFam" id="3.40.20.10:FF:000060">
    <property type="entry name" value="Cofilin"/>
    <property type="match status" value="1"/>
</dbReference>
<dbReference type="Gene3D" id="3.40.20.10">
    <property type="entry name" value="Severin"/>
    <property type="match status" value="1"/>
</dbReference>
<dbReference type="InterPro" id="IPR002108">
    <property type="entry name" value="ADF-H"/>
</dbReference>
<dbReference type="InterPro" id="IPR029006">
    <property type="entry name" value="ADF-H/Gelsolin-like_dom_sf"/>
</dbReference>
<dbReference type="InterPro" id="IPR017904">
    <property type="entry name" value="ADF/Cofilin"/>
</dbReference>
<dbReference type="PANTHER" id="PTHR11913">
    <property type="entry name" value="COFILIN-RELATED"/>
    <property type="match status" value="1"/>
</dbReference>
<dbReference type="Pfam" id="PF00241">
    <property type="entry name" value="Cofilin_ADF"/>
    <property type="match status" value="1"/>
</dbReference>
<dbReference type="PRINTS" id="PR00006">
    <property type="entry name" value="COFILIN"/>
</dbReference>
<dbReference type="SMART" id="SM00102">
    <property type="entry name" value="ADF"/>
    <property type="match status" value="1"/>
</dbReference>
<dbReference type="SUPFAM" id="SSF55753">
    <property type="entry name" value="Actin depolymerizing proteins"/>
    <property type="match status" value="1"/>
</dbReference>
<dbReference type="PROSITE" id="PS51263">
    <property type="entry name" value="ADF_H"/>
    <property type="match status" value="1"/>
</dbReference>
<sequence length="137" mass="15620">MSFSGVKVSPECLEAFQELKLGKSLRYVVFKMNDTKTEIVVEKKSTDKDFDTFLGDLPEKDCRYAIYDFEFNLGEGVRNKIIFISWSPDVAPIKSKMVYSSSKDTLRRAFTGIGTDIQATDFSEVAYETVLEKVTRK</sequence>
<name>COFI_SCHPO</name>
<proteinExistence type="evidence at protein level"/>
<feature type="chain" id="PRO_0000214914" description="Cofilin">
    <location>
        <begin position="1"/>
        <end position="137"/>
    </location>
</feature>
<feature type="domain" description="ADF-H" evidence="1">
    <location>
        <begin position="5"/>
        <end position="135"/>
    </location>
</feature>
<feature type="helix" evidence="5">
    <location>
        <begin position="10"/>
        <end position="21"/>
    </location>
</feature>
<feature type="strand" evidence="5">
    <location>
        <begin position="26"/>
        <end position="32"/>
    </location>
</feature>
<feature type="strand" evidence="5">
    <location>
        <begin position="36"/>
        <end position="45"/>
    </location>
</feature>
<feature type="helix" evidence="5">
    <location>
        <begin position="50"/>
        <end position="55"/>
    </location>
</feature>
<feature type="strand" evidence="5">
    <location>
        <begin position="59"/>
        <end position="61"/>
    </location>
</feature>
<feature type="strand" evidence="5">
    <location>
        <begin position="63"/>
        <end position="71"/>
    </location>
</feature>
<feature type="strand" evidence="5">
    <location>
        <begin position="73"/>
        <end position="76"/>
    </location>
</feature>
<feature type="strand" evidence="5">
    <location>
        <begin position="78"/>
        <end position="86"/>
    </location>
</feature>
<feature type="helix" evidence="5">
    <location>
        <begin position="93"/>
        <end position="107"/>
    </location>
</feature>
<feature type="strand" evidence="5">
    <location>
        <begin position="115"/>
        <end position="119"/>
    </location>
</feature>
<organism>
    <name type="scientific">Schizosaccharomyces pombe (strain 972 / ATCC 24843)</name>
    <name type="common">Fission yeast</name>
    <dbReference type="NCBI Taxonomy" id="284812"/>
    <lineage>
        <taxon>Eukaryota</taxon>
        <taxon>Fungi</taxon>
        <taxon>Dikarya</taxon>
        <taxon>Ascomycota</taxon>
        <taxon>Taphrinomycotina</taxon>
        <taxon>Schizosaccharomycetes</taxon>
        <taxon>Schizosaccharomycetales</taxon>
        <taxon>Schizosaccharomycetaceae</taxon>
        <taxon>Schizosaccharomyces</taxon>
    </lineage>
</organism>
<keyword id="KW-0002">3D-structure</keyword>
<keyword id="KW-0009">Actin-binding</keyword>
<keyword id="KW-0131">Cell cycle</keyword>
<keyword id="KW-0132">Cell division</keyword>
<keyword id="KW-0963">Cytoplasm</keyword>
<keyword id="KW-0206">Cytoskeleton</keyword>
<keyword id="KW-0539">Nucleus</keyword>
<keyword id="KW-1185">Reference proteome</keyword>
<gene>
    <name type="primary">cof1</name>
    <name type="synonym">adf1</name>
    <name type="ORF">SPAC20G4.06c</name>
</gene>